<organism>
    <name type="scientific">Loa loa</name>
    <name type="common">Eye worm</name>
    <name type="synonym">Filaria loa</name>
    <dbReference type="NCBI Taxonomy" id="7209"/>
    <lineage>
        <taxon>Eukaryota</taxon>
        <taxon>Metazoa</taxon>
        <taxon>Ecdysozoa</taxon>
        <taxon>Nematoda</taxon>
        <taxon>Chromadorea</taxon>
        <taxon>Rhabditida</taxon>
        <taxon>Spirurina</taxon>
        <taxon>Spiruromorpha</taxon>
        <taxon>Filarioidea</taxon>
        <taxon>Onchocercidae</taxon>
        <taxon>Loa</taxon>
    </lineage>
</organism>
<gene>
    <name evidence="5" type="primary">far-1</name>
</gene>
<sequence>MYHQLILLALIGTIMANVIPFSLSNISEEYKEFIPEEVRNFYKGLTAEDKEILRDLASKHATFANEDAALEALKDKSDKLYKNAVELRNFVKAKIDSLKPDAKAFVDEVIARARSLRSDDGQKFDTDKIKQAARDIIAKYQALNEETKEELKVTFPPIAKIISNEKLKRVASTFLQKN</sequence>
<dbReference type="EMBL" id="AF398373">
    <property type="protein sequence ID" value="AAK84218.1"/>
    <property type="status" value="ALT_INIT"/>
    <property type="molecule type" value="mRNA"/>
</dbReference>
<dbReference type="SMR" id="Q962W7"/>
<dbReference type="FunCoup" id="Q962W7">
    <property type="interactions" value="290"/>
</dbReference>
<dbReference type="STRING" id="7209.Q962W7"/>
<dbReference type="EnsemblMetazoa" id="EFO23085.2">
    <property type="protein sequence ID" value="EFO23085.2"/>
    <property type="gene ID" value="LOAG_05399"/>
</dbReference>
<dbReference type="EnsemblMetazoa" id="EJD75079.1">
    <property type="protein sequence ID" value="EJD75079.1"/>
    <property type="gene ID" value="LOAG_05399"/>
</dbReference>
<dbReference type="WBParaSite" id="EN70_3552">
    <property type="protein sequence ID" value="EN70_3552"/>
    <property type="gene ID" value="EN70_3552"/>
</dbReference>
<dbReference type="eggNOG" id="ENOG502S5FJ">
    <property type="taxonomic scope" value="Eukaryota"/>
</dbReference>
<dbReference type="HOGENOM" id="CLU_117803_0_0_1"/>
<dbReference type="InParanoid" id="Q962W7"/>
<dbReference type="OMA" id="RKIHAQY"/>
<dbReference type="OrthoDB" id="5808308at2759"/>
<dbReference type="Proteomes" id="UP000095285">
    <property type="component" value="Unassembled WGS sequence"/>
</dbReference>
<dbReference type="GO" id="GO:0005576">
    <property type="term" value="C:extracellular region"/>
    <property type="evidence" value="ECO:0000250"/>
    <property type="project" value="UniProtKB"/>
</dbReference>
<dbReference type="GO" id="GO:0005504">
    <property type="term" value="F:fatty acid binding"/>
    <property type="evidence" value="ECO:0000250"/>
    <property type="project" value="UniProtKB"/>
</dbReference>
<dbReference type="GO" id="GO:0016918">
    <property type="term" value="F:retinal binding"/>
    <property type="evidence" value="ECO:0007669"/>
    <property type="project" value="UniProtKB-KW"/>
</dbReference>
<dbReference type="GO" id="GO:0019841">
    <property type="term" value="F:retinol binding"/>
    <property type="evidence" value="ECO:0000250"/>
    <property type="project" value="UniProtKB"/>
</dbReference>
<dbReference type="Gene3D" id="1.20.120.1100">
    <property type="match status" value="1"/>
</dbReference>
<dbReference type="InterPro" id="IPR008632">
    <property type="entry name" value="Gp-FAR-1"/>
</dbReference>
<dbReference type="PANTHER" id="PTHR31418:SF3">
    <property type="entry name" value="FATTY ACID_RETINOL BINDING PROTEIN"/>
    <property type="match status" value="1"/>
</dbReference>
<dbReference type="PANTHER" id="PTHR31418">
    <property type="entry name" value="FATTY-ACID AND RETINOL-BINDING PROTEIN 1"/>
    <property type="match status" value="1"/>
</dbReference>
<dbReference type="Pfam" id="PF05823">
    <property type="entry name" value="Gp-FAR-1"/>
    <property type="match status" value="1"/>
</dbReference>
<evidence type="ECO:0000250" key="1"/>
<evidence type="ECO:0000250" key="2">
    <source>
        <dbReference type="UniProtKB" id="Q25619"/>
    </source>
</evidence>
<evidence type="ECO:0000255" key="3"/>
<evidence type="ECO:0000269" key="4">
    <source>
    </source>
</evidence>
<evidence type="ECO:0000303" key="5">
    <source>
    </source>
</evidence>
<evidence type="ECO:0000305" key="6"/>
<evidence type="ECO:0000312" key="7">
    <source>
        <dbReference type="EMBL" id="AAK84218.1"/>
    </source>
</evidence>
<feature type="signal peptide" evidence="3">
    <location>
        <begin position="1"/>
        <end position="16"/>
    </location>
</feature>
<feature type="chain" id="PRO_0000008761" description="Fatty-acid and retinol-binding protein 1" evidence="3">
    <location>
        <begin position="17"/>
        <end position="178"/>
    </location>
</feature>
<feature type="coiled-coil region" evidence="3">
    <location>
        <begin position="67"/>
        <end position="89"/>
    </location>
</feature>
<feature type="coiled-coil region" evidence="3">
    <location>
        <begin position="129"/>
        <end position="154"/>
    </location>
</feature>
<reference evidence="6 7" key="1">
    <citation type="journal article" date="2002" name="Mol. Biochem. Parasitol.">
        <title>The FAR proteins of filarial nematodes: secretion, glycosylation and lipid binding characteristics.</title>
        <authorList>
            <person name="Garofalo A."/>
            <person name="Klager S.L."/>
            <person name="Rowlinson M.C."/>
            <person name="Nirmalan N."/>
            <person name="Klion A.D."/>
            <person name="Allen J.E."/>
            <person name="Kennedy M.W."/>
            <person name="Bradley J.E."/>
        </authorList>
    </citation>
    <scope>NUCLEOTIDE SEQUENCE [MRNA]</scope>
    <scope>DEVELOPMENTAL STAGE</scope>
    <scope>LACK OF GLYCOSYLATION</scope>
    <source>
        <tissue evidence="4">Larva</tissue>
    </source>
</reference>
<keyword id="KW-0175">Coiled coil</keyword>
<keyword id="KW-0446">Lipid-binding</keyword>
<keyword id="KW-1185">Reference proteome</keyword>
<keyword id="KW-0683">Retinol-binding</keyword>
<keyword id="KW-0964">Secreted</keyword>
<keyword id="KW-0732">Signal</keyword>
<keyword id="KW-0845">Vitamin A</keyword>
<name>FAR1_LOALO</name>
<protein>
    <recommendedName>
        <fullName>Fatty-acid and retinol-binding protein 1</fullName>
    </recommendedName>
    <alternativeName>
        <fullName>Ll-FAR-1</fullName>
    </alternativeName>
    <alternativeName>
        <fullName>Ll20</fullName>
    </alternativeName>
</protein>
<proteinExistence type="evidence at protein level"/>
<accession>Q962W7</accession>
<comment type="function">
    <text evidence="1">Binds retinol and different fatty acids.</text>
</comment>
<comment type="subcellular location">
    <subcellularLocation>
        <location evidence="2">Secreted</location>
    </subcellularLocation>
</comment>
<comment type="developmental stage">
    <text evidence="4">Expressed in third stage larvae.</text>
</comment>
<comment type="PTM">
    <text evidence="4">Not glycosylated.</text>
</comment>
<comment type="similarity">
    <text evidence="2 6">Belongs to the fatty-acid and retinol-binding protein (FARBP) family.</text>
</comment>
<comment type="sequence caution" evidence="6">
    <conflict type="erroneous initiation">
        <sequence resource="EMBL-CDS" id="AAK84218"/>
    </conflict>
</comment>